<reference key="1">
    <citation type="journal article" date="1992" name="Mol. Cell. Biol.">
        <title>The translocation (6;9), associated with a specific subtype of acute myeloid leukemia, results in the fusion of two genes, dek and can, and the expression of a chimeric, leukemia-specific dek-can mRNA.</title>
        <authorList>
            <person name="Von Lindern M."/>
            <person name="Fornerod M."/>
            <person name="Van Baal S."/>
            <person name="Jaegle M."/>
            <person name="De Wit T."/>
            <person name="Buijs A."/>
            <person name="Grosveld G."/>
        </authorList>
    </citation>
    <scope>NUCLEOTIDE SEQUENCE [MRNA] (ISOFORM 1)</scope>
    <scope>CHROMOSOMAL TRANSLOCATION WITH NUP214</scope>
    <scope>INVOLVEMENT IN ACUTE MYELOID LEUKEMIA</scope>
    <source>
        <tissue>Testis</tissue>
    </source>
</reference>
<reference key="2">
    <citation type="journal article" date="2004" name="Nat. Genet.">
        <title>Complete sequencing and characterization of 21,243 full-length human cDNAs.</title>
        <authorList>
            <person name="Ota T."/>
            <person name="Suzuki Y."/>
            <person name="Nishikawa T."/>
            <person name="Otsuki T."/>
            <person name="Sugiyama T."/>
            <person name="Irie R."/>
            <person name="Wakamatsu A."/>
            <person name="Hayashi K."/>
            <person name="Sato H."/>
            <person name="Nagai K."/>
            <person name="Kimura K."/>
            <person name="Makita H."/>
            <person name="Sekine M."/>
            <person name="Obayashi M."/>
            <person name="Nishi T."/>
            <person name="Shibahara T."/>
            <person name="Tanaka T."/>
            <person name="Ishii S."/>
            <person name="Yamamoto J."/>
            <person name="Saito K."/>
            <person name="Kawai Y."/>
            <person name="Isono Y."/>
            <person name="Nakamura Y."/>
            <person name="Nagahari K."/>
            <person name="Murakami K."/>
            <person name="Yasuda T."/>
            <person name="Iwayanagi T."/>
            <person name="Wagatsuma M."/>
            <person name="Shiratori A."/>
            <person name="Sudo H."/>
            <person name="Hosoiri T."/>
            <person name="Kaku Y."/>
            <person name="Kodaira H."/>
            <person name="Kondo H."/>
            <person name="Sugawara M."/>
            <person name="Takahashi M."/>
            <person name="Kanda K."/>
            <person name="Yokoi T."/>
            <person name="Furuya T."/>
            <person name="Kikkawa E."/>
            <person name="Omura Y."/>
            <person name="Abe K."/>
            <person name="Kamihara K."/>
            <person name="Katsuta N."/>
            <person name="Sato K."/>
            <person name="Tanikawa M."/>
            <person name="Yamazaki M."/>
            <person name="Ninomiya K."/>
            <person name="Ishibashi T."/>
            <person name="Yamashita H."/>
            <person name="Murakawa K."/>
            <person name="Fujimori K."/>
            <person name="Tanai H."/>
            <person name="Kimata M."/>
            <person name="Watanabe M."/>
            <person name="Hiraoka S."/>
            <person name="Chiba Y."/>
            <person name="Ishida S."/>
            <person name="Ono Y."/>
            <person name="Takiguchi S."/>
            <person name="Watanabe S."/>
            <person name="Yosida M."/>
            <person name="Hotuta T."/>
            <person name="Kusano J."/>
            <person name="Kanehori K."/>
            <person name="Takahashi-Fujii A."/>
            <person name="Hara H."/>
            <person name="Tanase T.-O."/>
            <person name="Nomura Y."/>
            <person name="Togiya S."/>
            <person name="Komai F."/>
            <person name="Hara R."/>
            <person name="Takeuchi K."/>
            <person name="Arita M."/>
            <person name="Imose N."/>
            <person name="Musashino K."/>
            <person name="Yuuki H."/>
            <person name="Oshima A."/>
            <person name="Sasaki N."/>
            <person name="Aotsuka S."/>
            <person name="Yoshikawa Y."/>
            <person name="Matsunawa H."/>
            <person name="Ichihara T."/>
            <person name="Shiohata N."/>
            <person name="Sano S."/>
            <person name="Moriya S."/>
            <person name="Momiyama H."/>
            <person name="Satoh N."/>
            <person name="Takami S."/>
            <person name="Terashima Y."/>
            <person name="Suzuki O."/>
            <person name="Nakagawa S."/>
            <person name="Senoh A."/>
            <person name="Mizoguchi H."/>
            <person name="Goto Y."/>
            <person name="Shimizu F."/>
            <person name="Wakebe H."/>
            <person name="Hishigaki H."/>
            <person name="Watanabe T."/>
            <person name="Sugiyama A."/>
            <person name="Takemoto M."/>
            <person name="Kawakami B."/>
            <person name="Yamazaki M."/>
            <person name="Watanabe K."/>
            <person name="Kumagai A."/>
            <person name="Itakura S."/>
            <person name="Fukuzumi Y."/>
            <person name="Fujimori Y."/>
            <person name="Komiyama M."/>
            <person name="Tashiro H."/>
            <person name="Tanigami A."/>
            <person name="Fujiwara T."/>
            <person name="Ono T."/>
            <person name="Yamada K."/>
            <person name="Fujii Y."/>
            <person name="Ozaki K."/>
            <person name="Hirao M."/>
            <person name="Ohmori Y."/>
            <person name="Kawabata A."/>
            <person name="Hikiji T."/>
            <person name="Kobatake N."/>
            <person name="Inagaki H."/>
            <person name="Ikema Y."/>
            <person name="Okamoto S."/>
            <person name="Okitani R."/>
            <person name="Kawakami T."/>
            <person name="Noguchi S."/>
            <person name="Itoh T."/>
            <person name="Shigeta K."/>
            <person name="Senba T."/>
            <person name="Matsumura K."/>
            <person name="Nakajima Y."/>
            <person name="Mizuno T."/>
            <person name="Morinaga M."/>
            <person name="Sasaki M."/>
            <person name="Togashi T."/>
            <person name="Oyama M."/>
            <person name="Hata H."/>
            <person name="Watanabe M."/>
            <person name="Komatsu T."/>
            <person name="Mizushima-Sugano J."/>
            <person name="Satoh T."/>
            <person name="Shirai Y."/>
            <person name="Takahashi Y."/>
            <person name="Nakagawa K."/>
            <person name="Okumura K."/>
            <person name="Nagase T."/>
            <person name="Nomura N."/>
            <person name="Kikuchi H."/>
            <person name="Masuho Y."/>
            <person name="Yamashita R."/>
            <person name="Nakai K."/>
            <person name="Yada T."/>
            <person name="Nakamura Y."/>
            <person name="Ohara O."/>
            <person name="Isogai T."/>
            <person name="Sugano S."/>
        </authorList>
    </citation>
    <scope>NUCLEOTIDE SEQUENCE [LARGE SCALE MRNA] (ISOFORMS 1 AND 2)</scope>
    <source>
        <tissue>Brain</tissue>
    </source>
</reference>
<reference key="3">
    <citation type="journal article" date="2003" name="Nature">
        <title>The DNA sequence and analysis of human chromosome 6.</title>
        <authorList>
            <person name="Mungall A.J."/>
            <person name="Palmer S.A."/>
            <person name="Sims S.K."/>
            <person name="Edwards C.A."/>
            <person name="Ashurst J.L."/>
            <person name="Wilming L."/>
            <person name="Jones M.C."/>
            <person name="Horton R."/>
            <person name="Hunt S.E."/>
            <person name="Scott C.E."/>
            <person name="Gilbert J.G.R."/>
            <person name="Clamp M.E."/>
            <person name="Bethel G."/>
            <person name="Milne S."/>
            <person name="Ainscough R."/>
            <person name="Almeida J.P."/>
            <person name="Ambrose K.D."/>
            <person name="Andrews T.D."/>
            <person name="Ashwell R.I.S."/>
            <person name="Babbage A.K."/>
            <person name="Bagguley C.L."/>
            <person name="Bailey J."/>
            <person name="Banerjee R."/>
            <person name="Barker D.J."/>
            <person name="Barlow K.F."/>
            <person name="Bates K."/>
            <person name="Beare D.M."/>
            <person name="Beasley H."/>
            <person name="Beasley O."/>
            <person name="Bird C.P."/>
            <person name="Blakey S.E."/>
            <person name="Bray-Allen S."/>
            <person name="Brook J."/>
            <person name="Brown A.J."/>
            <person name="Brown J.Y."/>
            <person name="Burford D.C."/>
            <person name="Burrill W."/>
            <person name="Burton J."/>
            <person name="Carder C."/>
            <person name="Carter N.P."/>
            <person name="Chapman J.C."/>
            <person name="Clark S.Y."/>
            <person name="Clark G."/>
            <person name="Clee C.M."/>
            <person name="Clegg S."/>
            <person name="Cobley V."/>
            <person name="Collier R.E."/>
            <person name="Collins J.E."/>
            <person name="Colman L.K."/>
            <person name="Corby N.R."/>
            <person name="Coville G.J."/>
            <person name="Culley K.M."/>
            <person name="Dhami P."/>
            <person name="Davies J."/>
            <person name="Dunn M."/>
            <person name="Earthrowl M.E."/>
            <person name="Ellington A.E."/>
            <person name="Evans K.A."/>
            <person name="Faulkner L."/>
            <person name="Francis M.D."/>
            <person name="Frankish A."/>
            <person name="Frankland J."/>
            <person name="French L."/>
            <person name="Garner P."/>
            <person name="Garnett J."/>
            <person name="Ghori M.J."/>
            <person name="Gilby L.M."/>
            <person name="Gillson C.J."/>
            <person name="Glithero R.J."/>
            <person name="Grafham D.V."/>
            <person name="Grant M."/>
            <person name="Gribble S."/>
            <person name="Griffiths C."/>
            <person name="Griffiths M.N.D."/>
            <person name="Hall R."/>
            <person name="Halls K.S."/>
            <person name="Hammond S."/>
            <person name="Harley J.L."/>
            <person name="Hart E.A."/>
            <person name="Heath P.D."/>
            <person name="Heathcott R."/>
            <person name="Holmes S.J."/>
            <person name="Howden P.J."/>
            <person name="Howe K.L."/>
            <person name="Howell G.R."/>
            <person name="Huckle E."/>
            <person name="Humphray S.J."/>
            <person name="Humphries M.D."/>
            <person name="Hunt A.R."/>
            <person name="Johnson C.M."/>
            <person name="Joy A.A."/>
            <person name="Kay M."/>
            <person name="Keenan S.J."/>
            <person name="Kimberley A.M."/>
            <person name="King A."/>
            <person name="Laird G.K."/>
            <person name="Langford C."/>
            <person name="Lawlor S."/>
            <person name="Leongamornlert D.A."/>
            <person name="Leversha M."/>
            <person name="Lloyd C.R."/>
            <person name="Lloyd D.M."/>
            <person name="Loveland J.E."/>
            <person name="Lovell J."/>
            <person name="Martin S."/>
            <person name="Mashreghi-Mohammadi M."/>
            <person name="Maslen G.L."/>
            <person name="Matthews L."/>
            <person name="McCann O.T."/>
            <person name="McLaren S.J."/>
            <person name="McLay K."/>
            <person name="McMurray A."/>
            <person name="Moore M.J.F."/>
            <person name="Mullikin J.C."/>
            <person name="Niblett D."/>
            <person name="Nickerson T."/>
            <person name="Novik K.L."/>
            <person name="Oliver K."/>
            <person name="Overton-Larty E.K."/>
            <person name="Parker A."/>
            <person name="Patel R."/>
            <person name="Pearce A.V."/>
            <person name="Peck A.I."/>
            <person name="Phillimore B.J.C.T."/>
            <person name="Phillips S."/>
            <person name="Plumb R.W."/>
            <person name="Porter K.M."/>
            <person name="Ramsey Y."/>
            <person name="Ranby S.A."/>
            <person name="Rice C.M."/>
            <person name="Ross M.T."/>
            <person name="Searle S.M."/>
            <person name="Sehra H.K."/>
            <person name="Sheridan E."/>
            <person name="Skuce C.D."/>
            <person name="Smith S."/>
            <person name="Smith M."/>
            <person name="Spraggon L."/>
            <person name="Squares S.L."/>
            <person name="Steward C.A."/>
            <person name="Sycamore N."/>
            <person name="Tamlyn-Hall G."/>
            <person name="Tester J."/>
            <person name="Theaker A.J."/>
            <person name="Thomas D.W."/>
            <person name="Thorpe A."/>
            <person name="Tracey A."/>
            <person name="Tromans A."/>
            <person name="Tubby B."/>
            <person name="Wall M."/>
            <person name="Wallis J.M."/>
            <person name="West A.P."/>
            <person name="White S.S."/>
            <person name="Whitehead S.L."/>
            <person name="Whittaker H."/>
            <person name="Wild A."/>
            <person name="Willey D.J."/>
            <person name="Wilmer T.E."/>
            <person name="Wood J.M."/>
            <person name="Wray P.W."/>
            <person name="Wyatt J.C."/>
            <person name="Young L."/>
            <person name="Younger R.M."/>
            <person name="Bentley D.R."/>
            <person name="Coulson A."/>
            <person name="Durbin R.M."/>
            <person name="Hubbard T."/>
            <person name="Sulston J.E."/>
            <person name="Dunham I."/>
            <person name="Rogers J."/>
            <person name="Beck S."/>
        </authorList>
    </citation>
    <scope>NUCLEOTIDE SEQUENCE [LARGE SCALE GENOMIC DNA]</scope>
</reference>
<reference key="4">
    <citation type="submission" date="2005-07" db="EMBL/GenBank/DDBJ databases">
        <authorList>
            <person name="Mural R.J."/>
            <person name="Istrail S."/>
            <person name="Sutton G.G."/>
            <person name="Florea L."/>
            <person name="Halpern A.L."/>
            <person name="Mobarry C.M."/>
            <person name="Lippert R."/>
            <person name="Walenz B."/>
            <person name="Shatkay H."/>
            <person name="Dew I."/>
            <person name="Miller J.R."/>
            <person name="Flanigan M.J."/>
            <person name="Edwards N.J."/>
            <person name="Bolanos R."/>
            <person name="Fasulo D."/>
            <person name="Halldorsson B.V."/>
            <person name="Hannenhalli S."/>
            <person name="Turner R."/>
            <person name="Yooseph S."/>
            <person name="Lu F."/>
            <person name="Nusskern D.R."/>
            <person name="Shue B.C."/>
            <person name="Zheng X.H."/>
            <person name="Zhong F."/>
            <person name="Delcher A.L."/>
            <person name="Huson D.H."/>
            <person name="Kravitz S.A."/>
            <person name="Mouchard L."/>
            <person name="Reinert K."/>
            <person name="Remington K.A."/>
            <person name="Clark A.G."/>
            <person name="Waterman M.S."/>
            <person name="Eichler E.E."/>
            <person name="Adams M.D."/>
            <person name="Hunkapiller M.W."/>
            <person name="Myers E.W."/>
            <person name="Venter J.C."/>
        </authorList>
    </citation>
    <scope>NUCLEOTIDE SEQUENCE [LARGE SCALE GENOMIC DNA]</scope>
</reference>
<reference key="5">
    <citation type="journal article" date="2004" name="Genome Res.">
        <title>The status, quality, and expansion of the NIH full-length cDNA project: the Mammalian Gene Collection (MGC).</title>
        <authorList>
            <consortium name="The MGC Project Team"/>
        </authorList>
    </citation>
    <scope>NUCLEOTIDE SEQUENCE [LARGE SCALE MRNA] (ISOFORM 1)</scope>
    <source>
        <tissue>Cervix</tissue>
    </source>
</reference>
<reference key="6">
    <citation type="submission" date="2008-12" db="UniProtKB">
        <authorList>
            <person name="Bienvenut W.V."/>
            <person name="Lilla S."/>
            <person name="von Kriegsheim A."/>
            <person name="Lempens A."/>
            <person name="Kolch W."/>
        </authorList>
    </citation>
    <scope>PROTEIN SEQUENCE OF 2-21; 66-84; 94-100; 112-124; 126-137; 169-177; 179-187; 331-344 AND 349-362</scope>
    <scope>CLEAVAGE OF INITIATOR METHIONINE</scope>
    <scope>ACETYLATION AT SER-2</scope>
    <scope>IDENTIFICATION BY MASS SPECTROMETRY</scope>
    <source>
        <tissue>Ovarian carcinoma</tissue>
    </source>
</reference>
<reference key="7">
    <citation type="journal article" date="2000" name="EMBO J.">
        <title>The spliceosome deposits multiple proteins 20-24 nucleotides upstream of mRNA exon-exon junctions.</title>
        <authorList>
            <person name="Le Hir H."/>
            <person name="Izaurralde E."/>
            <person name="Maquat L.E."/>
            <person name="Moore M.J."/>
        </authorList>
    </citation>
    <scope>IDENTIFICATION IN A MRNA SPLICING-DEPENDENT EXON JUNCTION COMPLEX (EJC) WITH RBM8A; RNPS1; SRRM1 AND ALYREF/THOC4</scope>
</reference>
<reference key="8">
    <citation type="journal article" date="2002" name="J. Cell Sci.">
        <title>Daxx and histone deacetylase II associate with chromatin through an interaction with core histones and the chromatin-associated protein Dek.</title>
        <authorList>
            <person name="Hollenbach A.D."/>
            <person name="McPherson C.J."/>
            <person name="Mientjes E.J."/>
            <person name="Iyengar R."/>
            <person name="Grosveld G."/>
        </authorList>
    </citation>
    <scope>INTERACTION WITH DAXX</scope>
</reference>
<reference key="9">
    <citation type="journal article" date="2004" name="Mol. Cell. Biol.">
        <title>Phosphorylation by protein kinase CK2 changes the DNA binding properties of the human chromatin protein DEK.</title>
        <authorList>
            <person name="Kappes F."/>
            <person name="Damoc C."/>
            <person name="Knippers R."/>
            <person name="Przybylski M."/>
            <person name="Pinna L.A."/>
            <person name="Gruss C."/>
        </authorList>
    </citation>
    <scope>PHOSPHORYLATION AT SER-32; SER-159; THR-199; SER-201; SER-204; SER-243; SER-244; SER-251; SER-287; SER-288; THR-289; THR-290; SER-296; SER-301; SER-303; SER-306 AND SER-307</scope>
</reference>
<reference key="10">
    <citation type="journal article" date="2006" name="Cell">
        <title>Global, in vivo, and site-specific phosphorylation dynamics in signaling networks.</title>
        <authorList>
            <person name="Olsen J.V."/>
            <person name="Blagoev B."/>
            <person name="Gnad F."/>
            <person name="Macek B."/>
            <person name="Kumar C."/>
            <person name="Mortensen P."/>
            <person name="Mann M."/>
        </authorList>
    </citation>
    <scope>PHOSPHORYLATION [LARGE SCALE ANALYSIS] AT SER-32; SER-51; SER-227; SER-230; SER-231 AND SER-232</scope>
    <scope>IDENTIFICATION BY MASS SPECTROMETRY [LARGE SCALE ANALYSIS]</scope>
    <source>
        <tissue>Cervix carcinoma</tissue>
    </source>
</reference>
<reference key="11">
    <citation type="journal article" date="2006" name="J. Biol. Chem.">
        <title>The WSTF-SNF2h chromatin remodeling complex interacts with several nuclear proteins in transcription.</title>
        <authorList>
            <person name="Cavellan E."/>
            <person name="Asp P."/>
            <person name="Percipalle P."/>
            <person name="Oestlund Farrants A.-K."/>
        </authorList>
    </citation>
    <scope>IDENTIFICATION IN THE B-WICH COMPLEX</scope>
</reference>
<reference key="12">
    <citation type="journal article" date="2007" name="Biochem. Biophys. Res. Commun.">
        <title>The distribution of the DEK protein in mammalian chromatin.</title>
        <authorList>
            <person name="Hu H.G."/>
            <person name="Scholten I."/>
            <person name="Gruss C."/>
            <person name="Knippers R."/>
        </authorList>
    </citation>
    <scope>FUNCTION</scope>
    <scope>SUBCELLULAR LOCATION</scope>
</reference>
<reference key="13">
    <citation type="journal article" date="2008" name="Proc. Natl. Acad. Sci. U.S.A.">
        <title>A quantitative atlas of mitotic phosphorylation.</title>
        <authorList>
            <person name="Dephoure N."/>
            <person name="Zhou C."/>
            <person name="Villen J."/>
            <person name="Beausoleil S.A."/>
            <person name="Bakalarski C.E."/>
            <person name="Elledge S.J."/>
            <person name="Gygi S.P."/>
        </authorList>
    </citation>
    <scope>PHOSPHORYLATION [LARGE SCALE ANALYSIS] AT SER-307</scope>
    <scope>IDENTIFICATION BY MASS SPECTROMETRY [LARGE SCALE ANALYSIS]</scope>
    <source>
        <tissue>Cervix carcinoma</tissue>
    </source>
</reference>
<reference key="14">
    <citation type="journal article" date="2008" name="Proteomics">
        <title>Large-scale phosphoproteome analysis of human liver tissue by enrichment and fractionation of phosphopeptides with strong anion exchange chromatography.</title>
        <authorList>
            <person name="Han G."/>
            <person name="Ye M."/>
            <person name="Zhou H."/>
            <person name="Jiang X."/>
            <person name="Feng S."/>
            <person name="Jiang X."/>
            <person name="Tian R."/>
            <person name="Wan D."/>
            <person name="Zou H."/>
            <person name="Gu J."/>
        </authorList>
    </citation>
    <scope>PHOSPHORYLATION [LARGE SCALE ANALYSIS] AT SER-32</scope>
    <scope>IDENTIFICATION BY MASS SPECTROMETRY [LARGE SCALE ANALYSIS]</scope>
    <source>
        <tissue>Liver</tissue>
    </source>
</reference>
<reference key="15">
    <citation type="journal article" date="2009" name="Anal. Chem.">
        <title>Lys-N and trypsin cover complementary parts of the phosphoproteome in a refined SCX-based approach.</title>
        <authorList>
            <person name="Gauci S."/>
            <person name="Helbig A.O."/>
            <person name="Slijper M."/>
            <person name="Krijgsveld J."/>
            <person name="Heck A.J."/>
            <person name="Mohammed S."/>
        </authorList>
    </citation>
    <scope>ACETYLATION [LARGE SCALE ANALYSIS] AT SER-2</scope>
    <scope>CLEAVAGE OF INITIATOR METHIONINE [LARGE SCALE ANALYSIS]</scope>
    <scope>IDENTIFICATION BY MASS SPECTROMETRY [LARGE SCALE ANALYSIS]</scope>
</reference>
<reference key="16">
    <citation type="journal article" date="2009" name="Genes Cells">
        <title>Proteome analysis of human nuclear insoluble fractions.</title>
        <authorList>
            <person name="Takata H."/>
            <person name="Nishijima H."/>
            <person name="Ogura S."/>
            <person name="Sakaguchi T."/>
            <person name="Bubulya P.A."/>
            <person name="Mochizuki T."/>
            <person name="Shibahara K."/>
        </authorList>
    </citation>
    <scope>SUBCELLULAR LOCATION</scope>
</reference>
<reference key="17">
    <citation type="journal article" date="2010" name="Sci. Signal.">
        <title>Quantitative phosphoproteomics reveals widespread full phosphorylation site occupancy during mitosis.</title>
        <authorList>
            <person name="Olsen J.V."/>
            <person name="Vermeulen M."/>
            <person name="Santamaria A."/>
            <person name="Kumar C."/>
            <person name="Miller M.L."/>
            <person name="Jensen L.J."/>
            <person name="Gnad F."/>
            <person name="Cox J."/>
            <person name="Jensen T.S."/>
            <person name="Nigg E.A."/>
            <person name="Brunak S."/>
            <person name="Mann M."/>
        </authorList>
    </citation>
    <scope>ACETYLATION [LARGE SCALE ANALYSIS] AT SER-2</scope>
    <scope>PHOSPHORYLATION [LARGE SCALE ANALYSIS] AT THR-13; SER-19; SER-32; SER-51; SER-210; SER-230; SER-231; SER-232; SER-306 AND SER-307</scope>
    <scope>CLEAVAGE OF INITIATOR METHIONINE [LARGE SCALE ANALYSIS]</scope>
    <scope>IDENTIFICATION BY MASS SPECTROMETRY [LARGE SCALE ANALYSIS]</scope>
    <source>
        <tissue>Cervix carcinoma</tissue>
    </source>
</reference>
<reference key="18">
    <citation type="journal article" date="2011" name="BMC Syst. Biol.">
        <title>Initial characterization of the human central proteome.</title>
        <authorList>
            <person name="Burkard T.R."/>
            <person name="Planyavsky M."/>
            <person name="Kaupe I."/>
            <person name="Breitwieser F.P."/>
            <person name="Buerckstuemmer T."/>
            <person name="Bennett K.L."/>
            <person name="Superti-Furga G."/>
            <person name="Colinge J."/>
        </authorList>
    </citation>
    <scope>IDENTIFICATION BY MASS SPECTROMETRY [LARGE SCALE ANALYSIS]</scope>
</reference>
<reference key="19">
    <citation type="journal article" date="2011" name="Sci. Signal.">
        <title>System-wide temporal characterization of the proteome and phosphoproteome of human embryonic stem cell differentiation.</title>
        <authorList>
            <person name="Rigbolt K.T."/>
            <person name="Prokhorova T.A."/>
            <person name="Akimov V."/>
            <person name="Henningsen J."/>
            <person name="Johansen P.T."/>
            <person name="Kratchmarova I."/>
            <person name="Kassem M."/>
            <person name="Mann M."/>
            <person name="Olsen J.V."/>
            <person name="Blagoev B."/>
        </authorList>
    </citation>
    <scope>ACETYLATION [LARGE SCALE ANALYSIS] AT SER-2</scope>
    <scope>PHOSPHORYLATION [LARGE SCALE ANALYSIS] AT THR-13; SER-32; SER-51; SER-301; SER-303; SER-306 AND SER-307</scope>
    <scope>CLEAVAGE OF INITIATOR METHIONINE [LARGE SCALE ANALYSIS]</scope>
    <scope>IDENTIFICATION BY MASS SPECTROMETRY [LARGE SCALE ANALYSIS]</scope>
</reference>
<reference key="20">
    <citation type="journal article" date="2012" name="Proc. Natl. Acad. Sci. U.S.A.">
        <title>N-terminal acetylome analyses and functional insights of the N-terminal acetyltransferase NatB.</title>
        <authorList>
            <person name="Van Damme P."/>
            <person name="Lasa M."/>
            <person name="Polevoda B."/>
            <person name="Gazquez C."/>
            <person name="Elosegui-Artola A."/>
            <person name="Kim D.S."/>
            <person name="De Juan-Pardo E."/>
            <person name="Demeyer K."/>
            <person name="Hole K."/>
            <person name="Larrea E."/>
            <person name="Timmerman E."/>
            <person name="Prieto J."/>
            <person name="Arnesen T."/>
            <person name="Sherman F."/>
            <person name="Gevaert K."/>
            <person name="Aldabe R."/>
        </authorList>
    </citation>
    <scope>ACETYLATION [LARGE SCALE ANALYSIS] AT SER-2</scope>
    <scope>CLEAVAGE OF INITIATOR METHIONINE [LARGE SCALE ANALYSIS]</scope>
    <scope>IDENTIFICATION BY MASS SPECTROMETRY [LARGE SCALE ANALYSIS]</scope>
</reference>
<reference key="21">
    <citation type="journal article" date="2013" name="J. Proteome Res.">
        <title>Toward a comprehensive characterization of a human cancer cell phosphoproteome.</title>
        <authorList>
            <person name="Zhou H."/>
            <person name="Di Palma S."/>
            <person name="Preisinger C."/>
            <person name="Peng M."/>
            <person name="Polat A.N."/>
            <person name="Heck A.J."/>
            <person name="Mohammed S."/>
        </authorList>
    </citation>
    <scope>PHOSPHORYLATION [LARGE SCALE ANALYSIS] AT THR-13; SER-32; SER-51; SER-72; SER-121; SER-122; SER-301; SER-306 AND SER-307</scope>
    <scope>IDENTIFICATION BY MASS SPECTROMETRY [LARGE SCALE ANALYSIS]</scope>
    <source>
        <tissue>Cervix carcinoma</tissue>
        <tissue>Erythroleukemia</tissue>
    </source>
</reference>
<reference key="22">
    <citation type="journal article" date="2014" name="J. Proteomics">
        <title>An enzyme assisted RP-RPLC approach for in-depth analysis of human liver phosphoproteome.</title>
        <authorList>
            <person name="Bian Y."/>
            <person name="Song C."/>
            <person name="Cheng K."/>
            <person name="Dong M."/>
            <person name="Wang F."/>
            <person name="Huang J."/>
            <person name="Sun D."/>
            <person name="Wang L."/>
            <person name="Ye M."/>
            <person name="Zou H."/>
        </authorList>
    </citation>
    <scope>PHOSPHORYLATION [LARGE SCALE ANALYSIS] AT SER-230; SER-231; SER-232; SER-301; SER-303; SER-306 AND SER-307</scope>
    <scope>IDENTIFICATION BY MASS SPECTROMETRY [LARGE SCALE ANALYSIS]</scope>
    <source>
        <tissue>Liver</tissue>
    </source>
</reference>
<reference key="23">
    <citation type="journal article" date="2015" name="Proteomics">
        <title>N-terminome analysis of the human mitochondrial proteome.</title>
        <authorList>
            <person name="Vaca Jacome A.S."/>
            <person name="Rabilloud T."/>
            <person name="Schaeffer-Reiss C."/>
            <person name="Rompais M."/>
            <person name="Ayoub D."/>
            <person name="Lane L."/>
            <person name="Bairoch A."/>
            <person name="Van Dorsselaer A."/>
            <person name="Carapito C."/>
        </authorList>
    </citation>
    <scope>IDENTIFICATION BY MASS SPECTROMETRY [LARGE SCALE ANALYSIS]</scope>
</reference>
<reference key="24">
    <citation type="journal article" date="2017" name="Mol. Cell">
        <title>Serine ADP-ribosylation depends on HPF1.</title>
        <authorList>
            <person name="Bonfiglio J.J."/>
            <person name="Fontana P."/>
            <person name="Zhang Q."/>
            <person name="Colby T."/>
            <person name="Gibbs-Seymour I."/>
            <person name="Atanassov I."/>
            <person name="Bartlett E."/>
            <person name="Zaja R."/>
            <person name="Ahel I."/>
            <person name="Matic I."/>
        </authorList>
    </citation>
    <scope>ADP-RIBOSYLATION AT SER-279</scope>
</reference>
<reference key="25">
    <citation type="journal article" date="2004" name="Protein Sci.">
        <title>Solution NMR structure of the C-terminal domain of the human protein DEK.</title>
        <authorList>
            <person name="Devany M."/>
            <person name="Kotharu N.P."/>
            <person name="Matsuo H."/>
        </authorList>
    </citation>
    <scope>STRUCTURE BY NMR OF 309-375</scope>
    <scope>DNA-BINDING</scope>
</reference>
<reference key="26">
    <citation type="journal article" date="2008" name="Protein Sci.">
        <title>Solution NMR structure of the N-terminal domain of the human DEK protein.</title>
        <authorList>
            <person name="Devany M."/>
            <person name="Kappes F."/>
            <person name="Chen K.M."/>
            <person name="Markovitz D.M."/>
            <person name="Matsuo H."/>
        </authorList>
    </citation>
    <scope>STRUCTURE BY NMR OF 78-208</scope>
    <scope>DNA-BINDING</scope>
</reference>
<name>DEK_HUMAN</name>
<evidence type="ECO:0000250" key="1">
    <source>
        <dbReference type="UniProtKB" id="Q6AXS3"/>
    </source>
</evidence>
<evidence type="ECO:0000255" key="2"/>
<evidence type="ECO:0000255" key="3">
    <source>
        <dbReference type="PROSITE-ProRule" id="PRU01342"/>
    </source>
</evidence>
<evidence type="ECO:0000256" key="4">
    <source>
        <dbReference type="SAM" id="MobiDB-lite"/>
    </source>
</evidence>
<evidence type="ECO:0000269" key="5">
    <source>
    </source>
</evidence>
<evidence type="ECO:0000269" key="6">
    <source>
    </source>
</evidence>
<evidence type="ECO:0000269" key="7">
    <source>
    </source>
</evidence>
<evidence type="ECO:0000269" key="8">
    <source>
    </source>
</evidence>
<evidence type="ECO:0000269" key="9">
    <source>
    </source>
</evidence>
<evidence type="ECO:0000269" key="10">
    <source>
    </source>
</evidence>
<evidence type="ECO:0000269" key="11">
    <source>
    </source>
</evidence>
<evidence type="ECO:0000269" key="12">
    <source>
    </source>
</evidence>
<evidence type="ECO:0000269" key="13">
    <source ref="6"/>
</evidence>
<evidence type="ECO:0000303" key="14">
    <source>
    </source>
</evidence>
<evidence type="ECO:0007744" key="15">
    <source>
    </source>
</evidence>
<evidence type="ECO:0007744" key="16">
    <source>
    </source>
</evidence>
<evidence type="ECO:0007744" key="17">
    <source>
    </source>
</evidence>
<evidence type="ECO:0007744" key="18">
    <source>
    </source>
</evidence>
<evidence type="ECO:0007744" key="19">
    <source>
    </source>
</evidence>
<evidence type="ECO:0007744" key="20">
    <source>
    </source>
</evidence>
<evidence type="ECO:0007744" key="21">
    <source>
    </source>
</evidence>
<evidence type="ECO:0007744" key="22">
    <source>
    </source>
</evidence>
<evidence type="ECO:0007744" key="23">
    <source>
    </source>
</evidence>
<evidence type="ECO:0007829" key="24">
    <source>
        <dbReference type="PDB" id="1Q1V"/>
    </source>
</evidence>
<evidence type="ECO:0007829" key="25">
    <source>
        <dbReference type="PDB" id="2JX3"/>
    </source>
</evidence>
<gene>
    <name type="primary">DEK</name>
</gene>
<protein>
    <recommendedName>
        <fullName>Protein DEK</fullName>
    </recommendedName>
</protein>
<comment type="function">
    <text evidence="10">Involved in chromatin organization.</text>
</comment>
<comment type="subunit">
    <text evidence="5 6 9">Found in a mRNA splicing-dependent exon junction complex (EJC) with DEK, RBM8A, RNPS1, SRRM1 and ALYREF/THOC4. Interacts with histones H2A, H2B, H3, H4, acetylated histone H4, non-phosphorylated DAXX and HDAC2. Component of the B-WICH complex, at least composed of SMARCA5/SNF2H, BAZ1B/WSTF, SF3B1, DEK, MYO1C, ERCC6, MYBBP1A and DDX21. Binds DNA.</text>
</comment>
<comment type="interaction">
    <interactant intactId="EBI-301977">
        <id>P35659</id>
    </interactant>
    <interactant intactId="EBI-347804">
        <id>P68400</id>
        <label>CSNK2A1</label>
    </interactant>
    <organismsDiffer>false</organismsDiffer>
    <experiments>3</experiments>
</comment>
<comment type="interaction">
    <interactant intactId="EBI-301977">
        <id>P35659</id>
    </interactant>
    <interactant intactId="EBI-12178961">
        <id>Q8N954-2</id>
        <label>GPATCH11</label>
    </interactant>
    <organismsDiffer>false</organismsDiffer>
    <experiments>3</experiments>
</comment>
<comment type="subcellular location">
    <subcellularLocation>
        <location evidence="10 11">Nucleus</location>
    </subcellularLocation>
    <text>Enriched in regions where chromatin is decondensed or sparse in the interphase nuclei.</text>
</comment>
<comment type="alternative products">
    <event type="alternative splicing"/>
    <isoform>
        <id>P35659-1</id>
        <name>1</name>
        <sequence type="displayed"/>
    </isoform>
    <isoform>
        <id>P35659-2</id>
        <name>2</name>
        <sequence type="described" ref="VSP_042951"/>
    </isoform>
</comment>
<comment type="tissue specificity">
    <text>Ubiquitous. Expressed at relatively high levels.</text>
</comment>
<comment type="PTM">
    <text evidence="7">Phosphorylated by CK2. Phosphorylation fluctuates during the cell cycle with a moderate peak during G(1) phase, and weakens the binding of DEK to DNA.</text>
</comment>
<comment type="disease">
    <text evidence="8">A chromosomal aberration involving DEK is found in a subset of acute myeloid leukemia (AML); also known as acute non-lymphocytic leukemia (PubMed:1549122). Translocation t(6;9)(p23;q34) with NUP214/CAN (PubMed:1549122). It results in the formation of a DEK-NUP214 fusion gene (PubMed:1549122).</text>
</comment>
<comment type="online information" name="Atlas of Genetics and Cytogenetics in Oncology and Haematology">
    <link uri="https://atlasgeneticsoncology.org/gene/23/DEK"/>
</comment>
<sequence length="375" mass="42674">MSASAPAAEGEGTPTQPASEKEPEMPGPREESEEEEDEDDEEEEEEEKEKSLIVEGKREKKKVERLTMQVSSLQREPFTIAQGKGQKLCEIERIHFFLSKKKTDELRNLHKLLYNRPGTVSSLKKNVGQFSGFPFEKGSVQYKKKEEMLKKFRNAMLKSICEVLDLERSGVNSELVKRILNFLMHPKPSGKPLPKSKKTCSKGSKKERNSSGMARKAKRTKCPEILSDESSSDEDEKKNKEESSDDEDKESEEEPPKKTAKREKPKQKATSKSKKSVKSANVKKADSSTTKKNQNSSKKESESEDSSDDEPLIKKLKKPPTDEELKETIKKLLASANLEEVTMKQICKKVYENYPTYDLTERKDFIKTTVKELIS</sequence>
<dbReference type="EMBL" id="X64229">
    <property type="protein sequence ID" value="CAA45536.1"/>
    <property type="molecule type" value="mRNA"/>
</dbReference>
<dbReference type="EMBL" id="AK297749">
    <property type="protein sequence ID" value="BAG60099.1"/>
    <property type="molecule type" value="mRNA"/>
</dbReference>
<dbReference type="EMBL" id="AK312616">
    <property type="protein sequence ID" value="BAG35503.1"/>
    <property type="molecule type" value="mRNA"/>
</dbReference>
<dbReference type="EMBL" id="AL031774">
    <property type="status" value="NOT_ANNOTATED_CDS"/>
    <property type="molecule type" value="Genomic_DNA"/>
</dbReference>
<dbReference type="EMBL" id="CH471087">
    <property type="protein sequence ID" value="EAW55402.1"/>
    <property type="molecule type" value="Genomic_DNA"/>
</dbReference>
<dbReference type="EMBL" id="BC035259">
    <property type="protein sequence ID" value="AAH35259.1"/>
    <property type="molecule type" value="mRNA"/>
</dbReference>
<dbReference type="CCDS" id="CCDS34344.1">
    <molecule id="P35659-1"/>
</dbReference>
<dbReference type="CCDS" id="CCDS47382.1">
    <molecule id="P35659-2"/>
</dbReference>
<dbReference type="PIR" id="S26059">
    <property type="entry name" value="S26059"/>
</dbReference>
<dbReference type="RefSeq" id="NP_001128181.1">
    <molecule id="P35659-2"/>
    <property type="nucleotide sequence ID" value="NM_001134709.2"/>
</dbReference>
<dbReference type="RefSeq" id="NP_003463.1">
    <molecule id="P35659-1"/>
    <property type="nucleotide sequence ID" value="NM_003472.4"/>
</dbReference>
<dbReference type="RefSeq" id="XP_024302312.1">
    <molecule id="P35659-1"/>
    <property type="nucleotide sequence ID" value="XM_024446544.2"/>
</dbReference>
<dbReference type="RefSeq" id="XP_054212352.1">
    <molecule id="P35659-1"/>
    <property type="nucleotide sequence ID" value="XM_054356377.1"/>
</dbReference>
<dbReference type="PDB" id="1Q1V">
    <property type="method" value="NMR"/>
    <property type="chains" value="A=309-375"/>
</dbReference>
<dbReference type="PDB" id="2JX3">
    <property type="method" value="NMR"/>
    <property type="chains" value="A=78-208"/>
</dbReference>
<dbReference type="PDB" id="8KCY">
    <property type="method" value="EM"/>
    <property type="resolution" value="2.80 A"/>
    <property type="chains" value="K/L=1-375"/>
</dbReference>
<dbReference type="PDB" id="8KD1">
    <property type="method" value="EM"/>
    <property type="resolution" value="3.20 A"/>
    <property type="chains" value="K=1-375"/>
</dbReference>
<dbReference type="PDBsum" id="1Q1V"/>
<dbReference type="PDBsum" id="2JX3"/>
<dbReference type="PDBsum" id="8KCY"/>
<dbReference type="PDBsum" id="8KD1"/>
<dbReference type="BMRB" id="P35659"/>
<dbReference type="EMDB" id="EMD-37115"/>
<dbReference type="EMDB" id="EMD-37121"/>
<dbReference type="SMR" id="P35659"/>
<dbReference type="BioGRID" id="113643">
    <property type="interactions" value="209"/>
</dbReference>
<dbReference type="ComplexPortal" id="CPX-1099">
    <property type="entry name" value="B-WICH chromatin remodelling complex"/>
</dbReference>
<dbReference type="CORUM" id="P35659"/>
<dbReference type="FunCoup" id="P35659">
    <property type="interactions" value="3400"/>
</dbReference>
<dbReference type="IntAct" id="P35659">
    <property type="interactions" value="61"/>
</dbReference>
<dbReference type="MINT" id="P35659"/>
<dbReference type="STRING" id="9606.ENSP00000498653"/>
<dbReference type="GlyGen" id="P35659">
    <property type="glycosylation" value="2 sites, 1 O-linked glycan (2 sites)"/>
</dbReference>
<dbReference type="iPTMnet" id="P35659"/>
<dbReference type="MetOSite" id="P35659"/>
<dbReference type="PhosphoSitePlus" id="P35659"/>
<dbReference type="SwissPalm" id="P35659"/>
<dbReference type="BioMuta" id="DEK"/>
<dbReference type="DMDM" id="544150"/>
<dbReference type="jPOST" id="P35659"/>
<dbReference type="MassIVE" id="P35659"/>
<dbReference type="PaxDb" id="9606-ENSP00000380414"/>
<dbReference type="PeptideAtlas" id="P35659"/>
<dbReference type="ProteomicsDB" id="55127">
    <molecule id="P35659-1"/>
</dbReference>
<dbReference type="ProteomicsDB" id="55128">
    <molecule id="P35659-2"/>
</dbReference>
<dbReference type="Pumba" id="P35659"/>
<dbReference type="Antibodypedia" id="4456">
    <property type="antibodies" value="298 antibodies from 37 providers"/>
</dbReference>
<dbReference type="DNASU" id="7913"/>
<dbReference type="Ensembl" id="ENST00000244776.11">
    <molecule id="P35659-2"/>
    <property type="protein sequence ID" value="ENSP00000244776.7"/>
    <property type="gene ID" value="ENSG00000124795.17"/>
</dbReference>
<dbReference type="Ensembl" id="ENST00000652576.1">
    <molecule id="P35659-1"/>
    <property type="protein sequence ID" value="ENSP00000498335.1"/>
    <property type="gene ID" value="ENSG00000124795.17"/>
</dbReference>
<dbReference type="Ensembl" id="ENST00000652689.1">
    <molecule id="P35659-1"/>
    <property type="protein sequence ID" value="ENSP00000498653.1"/>
    <property type="gene ID" value="ENSG00000124795.17"/>
</dbReference>
<dbReference type="GeneID" id="7913"/>
<dbReference type="KEGG" id="hsa:7913"/>
<dbReference type="MANE-Select" id="ENST00000652689.1">
    <property type="protein sequence ID" value="ENSP00000498653.1"/>
    <property type="RefSeq nucleotide sequence ID" value="NM_003472.4"/>
    <property type="RefSeq protein sequence ID" value="NP_003463.1"/>
</dbReference>
<dbReference type="UCSC" id="uc003ncr.2">
    <molecule id="P35659-1"/>
    <property type="organism name" value="human"/>
</dbReference>
<dbReference type="AGR" id="HGNC:2768"/>
<dbReference type="CTD" id="7913"/>
<dbReference type="DisGeNET" id="7913"/>
<dbReference type="GeneCards" id="DEK"/>
<dbReference type="HGNC" id="HGNC:2768">
    <property type="gene designation" value="DEK"/>
</dbReference>
<dbReference type="HPA" id="ENSG00000124795">
    <property type="expression patterns" value="Low tissue specificity"/>
</dbReference>
<dbReference type="MalaCards" id="DEK"/>
<dbReference type="MIM" id="125264">
    <property type="type" value="gene"/>
</dbReference>
<dbReference type="neXtProt" id="NX_P35659"/>
<dbReference type="OpenTargets" id="ENSG00000124795"/>
<dbReference type="Orphanet" id="402014">
    <property type="disease" value="Acute myeloid leukemia with t(6;9)(p23;q34)"/>
</dbReference>
<dbReference type="PharmGKB" id="PA27251"/>
<dbReference type="VEuPathDB" id="HostDB:ENSG00000124795"/>
<dbReference type="eggNOG" id="KOG2266">
    <property type="taxonomic scope" value="Eukaryota"/>
</dbReference>
<dbReference type="GeneTree" id="ENSGT00390000017282"/>
<dbReference type="HOGENOM" id="CLU_041060_0_1_1"/>
<dbReference type="InParanoid" id="P35659"/>
<dbReference type="OMA" id="MIKKAPT"/>
<dbReference type="OrthoDB" id="370884at2759"/>
<dbReference type="PAN-GO" id="P35659">
    <property type="GO annotations" value="3 GO annotations based on evolutionary models"/>
</dbReference>
<dbReference type="PhylomeDB" id="P35659"/>
<dbReference type="TreeFam" id="TF324696"/>
<dbReference type="PathwayCommons" id="P35659"/>
<dbReference type="Reactome" id="R-HSA-5250924">
    <property type="pathway name" value="B-WICH complex positively regulates rRNA expression"/>
</dbReference>
<dbReference type="Reactome" id="R-HSA-8864260">
    <property type="pathway name" value="Transcriptional regulation by the AP-2 (TFAP2) family of transcription factors"/>
</dbReference>
<dbReference type="Reactome" id="R-HSA-9616222">
    <property type="pathway name" value="Transcriptional regulation of granulopoiesis"/>
</dbReference>
<dbReference type="SignaLink" id="P35659"/>
<dbReference type="SIGNOR" id="P35659"/>
<dbReference type="BioGRID-ORCS" id="7913">
    <property type="hits" value="98 hits in 1173 CRISPR screens"/>
</dbReference>
<dbReference type="CD-CODE" id="91857CE7">
    <property type="entry name" value="Nucleolus"/>
</dbReference>
<dbReference type="ChiTaRS" id="DEK">
    <property type="organism name" value="human"/>
</dbReference>
<dbReference type="EvolutionaryTrace" id="P35659"/>
<dbReference type="GeneWiki" id="DEK_(gene)"/>
<dbReference type="GenomeRNAi" id="7913"/>
<dbReference type="Pharos" id="P35659">
    <property type="development level" value="Tbio"/>
</dbReference>
<dbReference type="PRO" id="PR:P35659"/>
<dbReference type="Proteomes" id="UP000005640">
    <property type="component" value="Chromosome 6"/>
</dbReference>
<dbReference type="RNAct" id="P35659">
    <property type="molecule type" value="protein"/>
</dbReference>
<dbReference type="Bgee" id="ENSG00000124795">
    <property type="expression patterns" value="Expressed in calcaneal tendon and 207 other cell types or tissues"/>
</dbReference>
<dbReference type="ExpressionAtlas" id="P35659">
    <property type="expression patterns" value="baseline and differential"/>
</dbReference>
<dbReference type="GO" id="GO:0110016">
    <property type="term" value="C:B-WICH complex"/>
    <property type="evidence" value="ECO:0000314"/>
    <property type="project" value="ComplexPortal"/>
</dbReference>
<dbReference type="GO" id="GO:0043292">
    <property type="term" value="C:contractile muscle fiber"/>
    <property type="evidence" value="ECO:0007669"/>
    <property type="project" value="Ensembl"/>
</dbReference>
<dbReference type="GO" id="GO:0005730">
    <property type="term" value="C:nucleolus"/>
    <property type="evidence" value="ECO:0000303"/>
    <property type="project" value="ComplexPortal"/>
</dbReference>
<dbReference type="GO" id="GO:0005654">
    <property type="term" value="C:nucleoplasm"/>
    <property type="evidence" value="ECO:0000314"/>
    <property type="project" value="HPA"/>
</dbReference>
<dbReference type="GO" id="GO:0005634">
    <property type="term" value="C:nucleus"/>
    <property type="evidence" value="ECO:0000314"/>
    <property type="project" value="MGI"/>
</dbReference>
<dbReference type="GO" id="GO:0003677">
    <property type="term" value="F:DNA binding"/>
    <property type="evidence" value="ECO:0007669"/>
    <property type="project" value="UniProtKB-KW"/>
</dbReference>
<dbReference type="GO" id="GO:0042393">
    <property type="term" value="F:histone binding"/>
    <property type="evidence" value="ECO:0000314"/>
    <property type="project" value="UniProtKB"/>
</dbReference>
<dbReference type="GO" id="GO:0003723">
    <property type="term" value="F:RNA binding"/>
    <property type="evidence" value="ECO:0007005"/>
    <property type="project" value="UniProtKB"/>
</dbReference>
<dbReference type="GO" id="GO:0006338">
    <property type="term" value="P:chromatin remodeling"/>
    <property type="evidence" value="ECO:0000303"/>
    <property type="project" value="ComplexPortal"/>
</dbReference>
<dbReference type="GO" id="GO:0045943">
    <property type="term" value="P:positive regulation of transcription by RNA polymerase I"/>
    <property type="evidence" value="ECO:0000303"/>
    <property type="project" value="ComplexPortal"/>
</dbReference>
<dbReference type="GO" id="GO:0045944">
    <property type="term" value="P:positive regulation of transcription by RNA polymerase II"/>
    <property type="evidence" value="ECO:0000303"/>
    <property type="project" value="ComplexPortal"/>
</dbReference>
<dbReference type="GO" id="GO:0045945">
    <property type="term" value="P:positive regulation of transcription by RNA polymerase III"/>
    <property type="evidence" value="ECO:0000314"/>
    <property type="project" value="ComplexPortal"/>
</dbReference>
<dbReference type="GO" id="GO:2000779">
    <property type="term" value="P:regulation of double-strand break repair"/>
    <property type="evidence" value="ECO:0000315"/>
    <property type="project" value="MGI"/>
</dbReference>
<dbReference type="GO" id="GO:2001032">
    <property type="term" value="P:regulation of double-strand break repair via nonhomologous end joining"/>
    <property type="evidence" value="ECO:0007669"/>
    <property type="project" value="Ensembl"/>
</dbReference>
<dbReference type="GO" id="GO:0006357">
    <property type="term" value="P:regulation of transcription by RNA polymerase II"/>
    <property type="evidence" value="ECO:0000304"/>
    <property type="project" value="ProtInc"/>
</dbReference>
<dbReference type="GO" id="GO:0007165">
    <property type="term" value="P:signal transduction"/>
    <property type="evidence" value="ECO:0000304"/>
    <property type="project" value="ProtInc"/>
</dbReference>
<dbReference type="GO" id="GO:0006366">
    <property type="term" value="P:transcription by RNA polymerase II"/>
    <property type="evidence" value="ECO:0000304"/>
    <property type="project" value="ProtInc"/>
</dbReference>
<dbReference type="GO" id="GO:0019079">
    <property type="term" value="P:viral genome replication"/>
    <property type="evidence" value="ECO:0000304"/>
    <property type="project" value="ProtInc"/>
</dbReference>
<dbReference type="FunFam" id="1.10.10.60:FF:000148">
    <property type="entry name" value="Dek, isoform B"/>
    <property type="match status" value="1"/>
</dbReference>
<dbReference type="Gene3D" id="1.10.10.60">
    <property type="entry name" value="Homeodomain-like"/>
    <property type="match status" value="1"/>
</dbReference>
<dbReference type="InterPro" id="IPR044198">
    <property type="entry name" value="DEK"/>
</dbReference>
<dbReference type="InterPro" id="IPR014876">
    <property type="entry name" value="DEK_C"/>
</dbReference>
<dbReference type="InterPro" id="IPR003034">
    <property type="entry name" value="SAP_dom"/>
</dbReference>
<dbReference type="PANTHER" id="PTHR13468">
    <property type="entry name" value="DEK PROTEIN"/>
    <property type="match status" value="1"/>
</dbReference>
<dbReference type="PANTHER" id="PTHR13468:SF1">
    <property type="entry name" value="PROTEIN DEK"/>
    <property type="match status" value="1"/>
</dbReference>
<dbReference type="Pfam" id="PF08766">
    <property type="entry name" value="DEK_C"/>
    <property type="match status" value="1"/>
</dbReference>
<dbReference type="Pfam" id="PF02037">
    <property type="entry name" value="SAP"/>
    <property type="match status" value="1"/>
</dbReference>
<dbReference type="SMART" id="SM00513">
    <property type="entry name" value="SAP"/>
    <property type="match status" value="1"/>
</dbReference>
<dbReference type="SUPFAM" id="SSF109715">
    <property type="entry name" value="DEK C-terminal domain"/>
    <property type="match status" value="1"/>
</dbReference>
<dbReference type="PROSITE" id="PS51998">
    <property type="entry name" value="DEK_C"/>
    <property type="match status" value="1"/>
</dbReference>
<accession>P35659</accession>
<accession>B2R6K6</accession>
<accession>B4DN37</accession>
<accession>Q5TGV4</accession>
<accession>Q5TGV5</accession>
<feature type="initiator methionine" description="Removed" evidence="13 18 19 20 21">
    <location>
        <position position="1"/>
    </location>
</feature>
<feature type="chain" id="PRO_0000079858" description="Protein DEK">
    <location>
        <begin position="2"/>
        <end position="375"/>
    </location>
</feature>
<feature type="domain" description="SAP">
    <location>
        <begin position="149"/>
        <end position="183"/>
    </location>
</feature>
<feature type="domain" description="DEK-C" evidence="3">
    <location>
        <begin position="319"/>
        <end position="375"/>
    </location>
</feature>
<feature type="DNA-binding region">
    <location>
        <begin position="337"/>
        <end position="351"/>
    </location>
</feature>
<feature type="DNA-binding region">
    <location>
        <begin position="367"/>
        <end position="371"/>
    </location>
</feature>
<feature type="region of interest" description="Disordered" evidence="4">
    <location>
        <begin position="1"/>
        <end position="61"/>
    </location>
</feature>
<feature type="region of interest" description="Disordered" evidence="4">
    <location>
        <begin position="184"/>
        <end position="325"/>
    </location>
</feature>
<feature type="short sequence motif" description="Nuclear localization signal" evidence="2">
    <location>
        <begin position="205"/>
        <end position="221"/>
    </location>
</feature>
<feature type="compositionally biased region" description="Basic and acidic residues" evidence="4">
    <location>
        <begin position="19"/>
        <end position="30"/>
    </location>
</feature>
<feature type="compositionally biased region" description="Acidic residues" evidence="4">
    <location>
        <begin position="31"/>
        <end position="47"/>
    </location>
</feature>
<feature type="compositionally biased region" description="Basic and acidic residues" evidence="4">
    <location>
        <begin position="48"/>
        <end position="61"/>
    </location>
</feature>
<feature type="compositionally biased region" description="Basic residues" evidence="4">
    <location>
        <begin position="194"/>
        <end position="203"/>
    </location>
</feature>
<feature type="compositionally biased region" description="Acidic residues" evidence="4">
    <location>
        <begin position="243"/>
        <end position="253"/>
    </location>
</feature>
<feature type="compositionally biased region" description="Basic residues" evidence="4">
    <location>
        <begin position="258"/>
        <end position="277"/>
    </location>
</feature>
<feature type="compositionally biased region" description="Low complexity" evidence="4">
    <location>
        <begin position="278"/>
        <end position="296"/>
    </location>
</feature>
<feature type="modified residue" description="N-acetylserine" evidence="13 18 19 20 21">
    <location>
        <position position="2"/>
    </location>
</feature>
<feature type="modified residue" description="Phosphothreonine" evidence="19 20 22">
    <location>
        <position position="13"/>
    </location>
</feature>
<feature type="modified residue" description="Phosphothreonine" evidence="1">
    <location>
        <position position="15"/>
    </location>
</feature>
<feature type="modified residue" description="Phosphoserine" evidence="19">
    <location>
        <position position="19"/>
    </location>
</feature>
<feature type="modified residue" description="Phosphoserine; by CK2" evidence="7 15 16 19 20 22">
    <location>
        <position position="32"/>
    </location>
</feature>
<feature type="modified residue" description="Phosphoserine" evidence="15 19 20 22">
    <location>
        <position position="51"/>
    </location>
</feature>
<feature type="modified residue" description="Phosphoserine" evidence="22">
    <location>
        <position position="72"/>
    </location>
</feature>
<feature type="modified residue" description="Phosphoserine" evidence="22">
    <location>
        <position position="121"/>
    </location>
</feature>
<feature type="modified residue" description="Phosphoserine" evidence="22">
    <location>
        <position position="122"/>
    </location>
</feature>
<feature type="modified residue" description="Phosphoserine; by CK2" evidence="7">
    <location>
        <position position="159"/>
    </location>
</feature>
<feature type="modified residue" description="Phosphothreonine; by CK2" evidence="7">
    <location>
        <position position="199"/>
    </location>
</feature>
<feature type="modified residue" description="Phosphoserine; by CK2" evidence="7">
    <location>
        <position position="201"/>
    </location>
</feature>
<feature type="modified residue" description="Phosphoserine; by CK2" evidence="7">
    <location>
        <position position="204"/>
    </location>
</feature>
<feature type="modified residue" description="Phosphoserine" evidence="19">
    <location>
        <position position="210"/>
    </location>
</feature>
<feature type="modified residue" description="Phosphoserine" evidence="15">
    <location>
        <position position="227"/>
    </location>
</feature>
<feature type="modified residue" description="Phosphoserine" evidence="15 19 23">
    <location>
        <position position="230"/>
    </location>
</feature>
<feature type="modified residue" description="Phosphoserine" evidence="15 19 23">
    <location>
        <position position="231"/>
    </location>
</feature>
<feature type="modified residue" description="Phosphoserine" evidence="15 19 23">
    <location>
        <position position="232"/>
    </location>
</feature>
<feature type="modified residue" description="Phosphoserine; by CK2" evidence="7">
    <location>
        <position position="243"/>
    </location>
</feature>
<feature type="modified residue" description="Phosphoserine; by CK2" evidence="7">
    <location>
        <position position="244"/>
    </location>
</feature>
<feature type="modified residue" description="Phosphoserine; by CK2" evidence="7">
    <location>
        <position position="251"/>
    </location>
</feature>
<feature type="modified residue" description="ADP-ribosylserine" evidence="12">
    <location>
        <position position="279"/>
    </location>
</feature>
<feature type="modified residue" description="Phosphoserine; by CK2" evidence="7">
    <location>
        <position position="287"/>
    </location>
</feature>
<feature type="modified residue" description="Phosphoserine; by CK2" evidence="7">
    <location>
        <position position="288"/>
    </location>
</feature>
<feature type="modified residue" description="Phosphothreonine; by CK2" evidence="7">
    <location>
        <position position="289"/>
    </location>
</feature>
<feature type="modified residue" description="Phosphothreonine; by CK2" evidence="7">
    <location>
        <position position="290"/>
    </location>
</feature>
<feature type="modified residue" description="Phosphoserine; by CK2" evidence="7">
    <location>
        <position position="296"/>
    </location>
</feature>
<feature type="modified residue" description="Phosphoserine; by CK2" evidence="7 20 22 23">
    <location>
        <position position="301"/>
    </location>
</feature>
<feature type="modified residue" description="Phosphoserine; by CK2" evidence="7 20 23">
    <location>
        <position position="303"/>
    </location>
</feature>
<feature type="modified residue" description="Phosphoserine; by CK2" evidence="7 19 20 22 23">
    <location>
        <position position="306"/>
    </location>
</feature>
<feature type="modified residue" description="Phosphoserine; by CK2" evidence="7 17 19 20 22 23">
    <location>
        <position position="307"/>
    </location>
</feature>
<feature type="splice variant" id="VSP_042951" description="In isoform 2." evidence="14">
    <location>
        <begin position="49"/>
        <end position="82"/>
    </location>
</feature>
<feature type="sequence variant" id="VAR_050949" description="In dbSNP:rs17336208.">
    <original>V</original>
    <variation>A</variation>
    <location>
        <position position="140"/>
    </location>
</feature>
<feature type="turn" evidence="25">
    <location>
        <begin position="88"/>
        <end position="90"/>
    </location>
</feature>
<feature type="helix" evidence="25">
    <location>
        <begin position="92"/>
        <end position="99"/>
    </location>
</feature>
<feature type="helix" evidence="25">
    <location>
        <begin position="103"/>
        <end position="112"/>
    </location>
</feature>
<feature type="strand" evidence="25">
    <location>
        <begin position="114"/>
        <end position="116"/>
    </location>
</feature>
<feature type="helix" evidence="25">
    <location>
        <begin position="121"/>
        <end position="128"/>
    </location>
</feature>
<feature type="helix" evidence="25">
    <location>
        <begin position="140"/>
        <end position="162"/>
    </location>
</feature>
<feature type="turn" evidence="25">
    <location>
        <begin position="163"/>
        <end position="165"/>
    </location>
</feature>
<feature type="helix" evidence="25">
    <location>
        <begin position="172"/>
        <end position="181"/>
    </location>
</feature>
<feature type="turn" evidence="25">
    <location>
        <begin position="182"/>
        <end position="184"/>
    </location>
</feature>
<feature type="helix" evidence="24">
    <location>
        <begin position="322"/>
        <end position="333"/>
    </location>
</feature>
<feature type="helix" evidence="24">
    <location>
        <begin position="338"/>
        <end position="340"/>
    </location>
</feature>
<feature type="helix" evidence="24">
    <location>
        <begin position="343"/>
        <end position="353"/>
    </location>
</feature>
<feature type="strand" evidence="24">
    <location>
        <begin position="355"/>
        <end position="357"/>
    </location>
</feature>
<feature type="helix" evidence="24">
    <location>
        <begin position="361"/>
        <end position="375"/>
    </location>
</feature>
<keyword id="KW-0002">3D-structure</keyword>
<keyword id="KW-0007">Acetylation</keyword>
<keyword id="KW-0013">ADP-ribosylation</keyword>
<keyword id="KW-0025">Alternative splicing</keyword>
<keyword id="KW-0156">Chromatin regulator</keyword>
<keyword id="KW-0160">Chromosomal rearrangement</keyword>
<keyword id="KW-0903">Direct protein sequencing</keyword>
<keyword id="KW-0238">DNA-binding</keyword>
<keyword id="KW-0539">Nucleus</keyword>
<keyword id="KW-0597">Phosphoprotein</keyword>
<keyword id="KW-1267">Proteomics identification</keyword>
<keyword id="KW-0656">Proto-oncogene</keyword>
<keyword id="KW-1185">Reference proteome</keyword>
<organism>
    <name type="scientific">Homo sapiens</name>
    <name type="common">Human</name>
    <dbReference type="NCBI Taxonomy" id="9606"/>
    <lineage>
        <taxon>Eukaryota</taxon>
        <taxon>Metazoa</taxon>
        <taxon>Chordata</taxon>
        <taxon>Craniata</taxon>
        <taxon>Vertebrata</taxon>
        <taxon>Euteleostomi</taxon>
        <taxon>Mammalia</taxon>
        <taxon>Eutheria</taxon>
        <taxon>Euarchontoglires</taxon>
        <taxon>Primates</taxon>
        <taxon>Haplorrhini</taxon>
        <taxon>Catarrhini</taxon>
        <taxon>Hominidae</taxon>
        <taxon>Homo</taxon>
    </lineage>
</organism>
<proteinExistence type="evidence at protein level"/>